<name>RL7_TRIL1</name>
<feature type="chain" id="PRO_1000121443" description="Large ribosomal subunit protein bL12">
    <location>
        <begin position="1"/>
        <end position="126"/>
    </location>
</feature>
<sequence length="126" mass="13044">MAEITKADVVAFIEKMTVLELAELVKELEEKFGVSAAAPVAVAAAAPAAAAEAAEEKTEFDVILKSAGANKINVIKVVRTLTSLGLKEAKDLVDGAPSPVKTGISKAEAEEAQKQLVEAGAEVEIK</sequence>
<reference key="1">
    <citation type="submission" date="2008-05" db="EMBL/GenBank/DDBJ databases">
        <title>Complete sequence of chromosome of Geobacter lovleyi SZ.</title>
        <authorList>
            <consortium name="US DOE Joint Genome Institute"/>
            <person name="Lucas S."/>
            <person name="Copeland A."/>
            <person name="Lapidus A."/>
            <person name="Glavina del Rio T."/>
            <person name="Dalin E."/>
            <person name="Tice H."/>
            <person name="Bruce D."/>
            <person name="Goodwin L."/>
            <person name="Pitluck S."/>
            <person name="Chertkov O."/>
            <person name="Meincke L."/>
            <person name="Brettin T."/>
            <person name="Detter J.C."/>
            <person name="Han C."/>
            <person name="Tapia R."/>
            <person name="Kuske C.R."/>
            <person name="Schmutz J."/>
            <person name="Larimer F."/>
            <person name="Land M."/>
            <person name="Hauser L."/>
            <person name="Kyrpides N."/>
            <person name="Mikhailova N."/>
            <person name="Sung Y."/>
            <person name="Fletcher K.E."/>
            <person name="Ritalahti K.M."/>
            <person name="Loeffler F.E."/>
            <person name="Richardson P."/>
        </authorList>
    </citation>
    <scope>NUCLEOTIDE SEQUENCE [LARGE SCALE GENOMIC DNA]</scope>
    <source>
        <strain>ATCC BAA-1151 / DSM 17278 / SZ</strain>
    </source>
</reference>
<organism>
    <name type="scientific">Trichlorobacter lovleyi (strain ATCC BAA-1151 / DSM 17278 / SZ)</name>
    <name type="common">Geobacter lovleyi</name>
    <dbReference type="NCBI Taxonomy" id="398767"/>
    <lineage>
        <taxon>Bacteria</taxon>
        <taxon>Pseudomonadati</taxon>
        <taxon>Thermodesulfobacteriota</taxon>
        <taxon>Desulfuromonadia</taxon>
        <taxon>Geobacterales</taxon>
        <taxon>Geobacteraceae</taxon>
        <taxon>Trichlorobacter</taxon>
    </lineage>
</organism>
<proteinExistence type="inferred from homology"/>
<protein>
    <recommendedName>
        <fullName evidence="1">Large ribosomal subunit protein bL12</fullName>
    </recommendedName>
    <alternativeName>
        <fullName evidence="2">50S ribosomal protein L7/L12</fullName>
    </alternativeName>
</protein>
<accession>B3E7S7</accession>
<keyword id="KW-1185">Reference proteome</keyword>
<keyword id="KW-0687">Ribonucleoprotein</keyword>
<keyword id="KW-0689">Ribosomal protein</keyword>
<evidence type="ECO:0000255" key="1">
    <source>
        <dbReference type="HAMAP-Rule" id="MF_00368"/>
    </source>
</evidence>
<evidence type="ECO:0000305" key="2"/>
<dbReference type="EMBL" id="CP001089">
    <property type="protein sequence ID" value="ACD95059.1"/>
    <property type="molecule type" value="Genomic_DNA"/>
</dbReference>
<dbReference type="RefSeq" id="WP_012469405.1">
    <property type="nucleotide sequence ID" value="NC_010814.1"/>
</dbReference>
<dbReference type="SMR" id="B3E7S7"/>
<dbReference type="STRING" id="398767.Glov_1338"/>
<dbReference type="KEGG" id="glo:Glov_1338"/>
<dbReference type="eggNOG" id="COG0222">
    <property type="taxonomic scope" value="Bacteria"/>
</dbReference>
<dbReference type="HOGENOM" id="CLU_086499_3_2_7"/>
<dbReference type="OrthoDB" id="9811748at2"/>
<dbReference type="Proteomes" id="UP000002420">
    <property type="component" value="Chromosome"/>
</dbReference>
<dbReference type="GO" id="GO:0022625">
    <property type="term" value="C:cytosolic large ribosomal subunit"/>
    <property type="evidence" value="ECO:0007669"/>
    <property type="project" value="TreeGrafter"/>
</dbReference>
<dbReference type="GO" id="GO:0003729">
    <property type="term" value="F:mRNA binding"/>
    <property type="evidence" value="ECO:0007669"/>
    <property type="project" value="TreeGrafter"/>
</dbReference>
<dbReference type="GO" id="GO:0003735">
    <property type="term" value="F:structural constituent of ribosome"/>
    <property type="evidence" value="ECO:0007669"/>
    <property type="project" value="InterPro"/>
</dbReference>
<dbReference type="GO" id="GO:0006412">
    <property type="term" value="P:translation"/>
    <property type="evidence" value="ECO:0007669"/>
    <property type="project" value="UniProtKB-UniRule"/>
</dbReference>
<dbReference type="CDD" id="cd00387">
    <property type="entry name" value="Ribosomal_L7_L12"/>
    <property type="match status" value="1"/>
</dbReference>
<dbReference type="FunFam" id="3.30.1390.10:FF:000001">
    <property type="entry name" value="50S ribosomal protein L7/L12"/>
    <property type="match status" value="1"/>
</dbReference>
<dbReference type="Gene3D" id="3.30.1390.10">
    <property type="match status" value="1"/>
</dbReference>
<dbReference type="Gene3D" id="1.20.5.710">
    <property type="entry name" value="Single helix bin"/>
    <property type="match status" value="1"/>
</dbReference>
<dbReference type="HAMAP" id="MF_00368">
    <property type="entry name" value="Ribosomal_bL12"/>
    <property type="match status" value="1"/>
</dbReference>
<dbReference type="InterPro" id="IPR000206">
    <property type="entry name" value="Ribosomal_bL12"/>
</dbReference>
<dbReference type="InterPro" id="IPR013823">
    <property type="entry name" value="Ribosomal_bL12_C"/>
</dbReference>
<dbReference type="InterPro" id="IPR014719">
    <property type="entry name" value="Ribosomal_bL12_C/ClpS-like"/>
</dbReference>
<dbReference type="InterPro" id="IPR008932">
    <property type="entry name" value="Ribosomal_bL12_oligo"/>
</dbReference>
<dbReference type="InterPro" id="IPR036235">
    <property type="entry name" value="Ribosomal_bL12_oligo_N_sf"/>
</dbReference>
<dbReference type="NCBIfam" id="TIGR00855">
    <property type="entry name" value="L12"/>
    <property type="match status" value="1"/>
</dbReference>
<dbReference type="PANTHER" id="PTHR45987">
    <property type="entry name" value="39S RIBOSOMAL PROTEIN L12"/>
    <property type="match status" value="1"/>
</dbReference>
<dbReference type="PANTHER" id="PTHR45987:SF4">
    <property type="entry name" value="LARGE RIBOSOMAL SUBUNIT PROTEIN BL12M"/>
    <property type="match status" value="1"/>
</dbReference>
<dbReference type="Pfam" id="PF00542">
    <property type="entry name" value="Ribosomal_L12"/>
    <property type="match status" value="1"/>
</dbReference>
<dbReference type="Pfam" id="PF16320">
    <property type="entry name" value="Ribosomal_L12_N"/>
    <property type="match status" value="1"/>
</dbReference>
<dbReference type="SUPFAM" id="SSF54736">
    <property type="entry name" value="ClpS-like"/>
    <property type="match status" value="1"/>
</dbReference>
<dbReference type="SUPFAM" id="SSF48300">
    <property type="entry name" value="Ribosomal protein L7/12, oligomerisation (N-terminal) domain"/>
    <property type="match status" value="1"/>
</dbReference>
<gene>
    <name evidence="1" type="primary">rplL</name>
    <name type="ordered locus">Glov_1338</name>
</gene>
<comment type="function">
    <text evidence="1">Forms part of the ribosomal stalk which helps the ribosome interact with GTP-bound translation factors. Is thus essential for accurate translation.</text>
</comment>
<comment type="subunit">
    <text evidence="1">Homodimer. Part of the ribosomal stalk of the 50S ribosomal subunit. Forms a multimeric L10(L12)X complex, where L10 forms an elongated spine to which 2 to 4 L12 dimers bind in a sequential fashion. Binds GTP-bound translation factors.</text>
</comment>
<comment type="similarity">
    <text evidence="1">Belongs to the bacterial ribosomal protein bL12 family.</text>
</comment>